<sequence>MAAMFSNTRSVASSSGHIVEFKAGRSRLEAGSGDTMRKVVAEPKKGLVFIKQSNDMLIHFCWKDRETGAVVDDLIIFPDDAEFKAVPGCPDGKVYMLKFKSGDMKLFWIQDSTPDVDKDLVKKVTDALNKPPTSRPAASRSAGSNANTDRQSAGGSLISSSDMNAPLGGIDQGQLMSLIQSLQGGNSDTLPISSVPRGEDASSEADCEPSTNAAEEGSSNPLSLNNPAIQQIFNNLGRSQKKEVAVSLATALSNETVAEVARNHAEELAPHLPTSDDPARELSETVRTPQFRQAADTLGHALQTGQLGPVVAQFGMDEATVGSANQGDIRGFAANLTKAEGGEDAAKTQNSDDDATREPEPKRNRPDNEDMDVD</sequence>
<feature type="chain" id="PRO_0000065257" description="Proteasomal ubiquitin receptor ADRM1 homolog">
    <location>
        <begin position="1"/>
        <end position="374"/>
    </location>
</feature>
<feature type="domain" description="Pru" evidence="3">
    <location>
        <begin position="13"/>
        <end position="131"/>
    </location>
</feature>
<feature type="domain" description="DEUBAD" evidence="2">
    <location>
        <begin position="239"/>
        <end position="346"/>
    </location>
</feature>
<feature type="region of interest" description="Disordered" evidence="4">
    <location>
        <begin position="126"/>
        <end position="166"/>
    </location>
</feature>
<feature type="region of interest" description="Disordered" evidence="4">
    <location>
        <begin position="187"/>
        <end position="223"/>
    </location>
</feature>
<feature type="region of interest" description="Disordered" evidence="4">
    <location>
        <begin position="334"/>
        <end position="374"/>
    </location>
</feature>
<feature type="compositionally biased region" description="Polar residues" evidence="4">
    <location>
        <begin position="141"/>
        <end position="163"/>
    </location>
</feature>
<feature type="compositionally biased region" description="Polar residues" evidence="4">
    <location>
        <begin position="209"/>
        <end position="223"/>
    </location>
</feature>
<feature type="compositionally biased region" description="Basic and acidic residues" evidence="4">
    <location>
        <begin position="354"/>
        <end position="368"/>
    </location>
</feature>
<evidence type="ECO:0000250" key="1">
    <source>
        <dbReference type="UniProtKB" id="Q16186"/>
    </source>
</evidence>
<evidence type="ECO:0000255" key="2">
    <source>
        <dbReference type="PROSITE-ProRule" id="PRU01264"/>
    </source>
</evidence>
<evidence type="ECO:0000255" key="3">
    <source>
        <dbReference type="PROSITE-ProRule" id="PRU01265"/>
    </source>
</evidence>
<evidence type="ECO:0000256" key="4">
    <source>
        <dbReference type="SAM" id="MobiDB-lite"/>
    </source>
</evidence>
<evidence type="ECO:0000269" key="5">
    <source>
    </source>
</evidence>
<evidence type="ECO:0000305" key="6"/>
<evidence type="ECO:0000312" key="7">
    <source>
        <dbReference type="WormBase" id="C56G2.7a"/>
    </source>
</evidence>
<dbReference type="EMBL" id="BX284603">
    <property type="protein sequence ID" value="CCD66338.1"/>
    <property type="molecule type" value="Genomic_DNA"/>
</dbReference>
<dbReference type="RefSeq" id="NP_498387.2">
    <property type="nucleotide sequence ID" value="NM_065986.6"/>
</dbReference>
<dbReference type="SMR" id="Q09289"/>
<dbReference type="BioGRID" id="533206">
    <property type="interactions" value="43"/>
</dbReference>
<dbReference type="FunCoup" id="Q09289">
    <property type="interactions" value="2455"/>
</dbReference>
<dbReference type="IntAct" id="Q09289">
    <property type="interactions" value="5"/>
</dbReference>
<dbReference type="STRING" id="6239.C56G2.7b.1"/>
<dbReference type="iPTMnet" id="Q09289"/>
<dbReference type="PaxDb" id="6239-C56G2.7"/>
<dbReference type="PeptideAtlas" id="Q09289"/>
<dbReference type="EnsemblMetazoa" id="C56G2.7a.1">
    <property type="protein sequence ID" value="C56G2.7a.1"/>
    <property type="gene ID" value="WBGene00016981"/>
</dbReference>
<dbReference type="GeneID" id="3565888"/>
<dbReference type="KEGG" id="cel:CELE_C56G2.7"/>
<dbReference type="UCSC" id="C56G2.7">
    <property type="organism name" value="c. elegans"/>
</dbReference>
<dbReference type="AGR" id="WB:WBGene00016981"/>
<dbReference type="CTD" id="3565888"/>
<dbReference type="WormBase" id="C56G2.7a">
    <property type="protein sequence ID" value="CE30640"/>
    <property type="gene ID" value="WBGene00016981"/>
    <property type="gene designation" value="rpn-13"/>
</dbReference>
<dbReference type="eggNOG" id="KOG3037">
    <property type="taxonomic scope" value="Eukaryota"/>
</dbReference>
<dbReference type="GeneTree" id="ENSGT00390000013839"/>
<dbReference type="HOGENOM" id="CLU_041798_0_0_1"/>
<dbReference type="InParanoid" id="Q09289"/>
<dbReference type="OMA" id="SNQRHFF"/>
<dbReference type="OrthoDB" id="340431at2759"/>
<dbReference type="PhylomeDB" id="Q09289"/>
<dbReference type="Reactome" id="R-CEL-1234176">
    <property type="pathway name" value="Oxygen-dependent proline hydroxylation of Hypoxia-inducible Factor Alpha"/>
</dbReference>
<dbReference type="Reactome" id="R-CEL-1236978">
    <property type="pathway name" value="Cross-presentation of soluble exogenous antigens (endosomes)"/>
</dbReference>
<dbReference type="Reactome" id="R-CEL-187577">
    <property type="pathway name" value="SCF(Skp2)-mediated degradation of p27/p21"/>
</dbReference>
<dbReference type="Reactome" id="R-CEL-195253">
    <property type="pathway name" value="Degradation of beta-catenin by the destruction complex"/>
</dbReference>
<dbReference type="Reactome" id="R-CEL-349425">
    <property type="pathway name" value="Autodegradation of the E3 ubiquitin ligase COP1"/>
</dbReference>
<dbReference type="Reactome" id="R-CEL-350562">
    <property type="pathway name" value="Regulation of ornithine decarboxylase (ODC)"/>
</dbReference>
<dbReference type="Reactome" id="R-CEL-382556">
    <property type="pathway name" value="ABC-family proteins mediated transport"/>
</dbReference>
<dbReference type="Reactome" id="R-CEL-4608870">
    <property type="pathway name" value="Asymmetric localization of PCP proteins"/>
</dbReference>
<dbReference type="Reactome" id="R-CEL-4641258">
    <property type="pathway name" value="Degradation of DVL"/>
</dbReference>
<dbReference type="Reactome" id="R-CEL-5632684">
    <property type="pathway name" value="Hedgehog 'on' state"/>
</dbReference>
<dbReference type="Reactome" id="R-CEL-5687128">
    <property type="pathway name" value="MAPK6/MAPK4 signaling"/>
</dbReference>
<dbReference type="Reactome" id="R-CEL-5689603">
    <property type="pathway name" value="UCH proteinases"/>
</dbReference>
<dbReference type="Reactome" id="R-CEL-5689880">
    <property type="pathway name" value="Ub-specific processing proteases"/>
</dbReference>
<dbReference type="Reactome" id="R-CEL-68949">
    <property type="pathway name" value="Orc1 removal from chromatin"/>
</dbReference>
<dbReference type="Reactome" id="R-CEL-69017">
    <property type="pathway name" value="CDK-mediated phosphorylation and removal of Cdc6"/>
</dbReference>
<dbReference type="Reactome" id="R-CEL-69601">
    <property type="pathway name" value="Ubiquitin Mediated Degradation of Phosphorylated Cdc25A"/>
</dbReference>
<dbReference type="Reactome" id="R-CEL-75815">
    <property type="pathway name" value="Ubiquitin-dependent degradation of Cyclin D"/>
</dbReference>
<dbReference type="Reactome" id="R-CEL-8854050">
    <property type="pathway name" value="FBXL7 down-regulates AURKA during mitotic entry and in early mitosis"/>
</dbReference>
<dbReference type="Reactome" id="R-CEL-8939902">
    <property type="pathway name" value="Regulation of RUNX2 expression and activity"/>
</dbReference>
<dbReference type="Reactome" id="R-CEL-8941858">
    <property type="pathway name" value="Regulation of RUNX3 expression and activity"/>
</dbReference>
<dbReference type="Reactome" id="R-CEL-8948751">
    <property type="pathway name" value="Regulation of PTEN stability and activity"/>
</dbReference>
<dbReference type="Reactome" id="R-CEL-8951664">
    <property type="pathway name" value="Neddylation"/>
</dbReference>
<dbReference type="Reactome" id="R-CEL-9755511">
    <property type="pathway name" value="KEAP1-NFE2L2 pathway"/>
</dbReference>
<dbReference type="Reactome" id="R-CEL-9762114">
    <property type="pathway name" value="GSK3B and BTRC:CUL1-mediated-degradation of NFE2L2"/>
</dbReference>
<dbReference type="Reactome" id="R-CEL-983168">
    <property type="pathway name" value="Antigen processing: Ubiquitination &amp; Proteasome degradation"/>
</dbReference>
<dbReference type="Reactome" id="R-CEL-9907900">
    <property type="pathway name" value="Proteasome assembly"/>
</dbReference>
<dbReference type="PRO" id="PR:Q09289"/>
<dbReference type="Proteomes" id="UP000001940">
    <property type="component" value="Chromosome III"/>
</dbReference>
<dbReference type="Bgee" id="WBGene00016981">
    <property type="expression patterns" value="Expressed in adult organism and 4 other cell types or tissues"/>
</dbReference>
<dbReference type="ExpressionAtlas" id="Q09289">
    <property type="expression patterns" value="baseline and differential"/>
</dbReference>
<dbReference type="GO" id="GO:0005737">
    <property type="term" value="C:cytoplasm"/>
    <property type="evidence" value="ECO:0007669"/>
    <property type="project" value="UniProtKB-SubCell"/>
</dbReference>
<dbReference type="GO" id="GO:0005634">
    <property type="term" value="C:nucleus"/>
    <property type="evidence" value="ECO:0007669"/>
    <property type="project" value="UniProtKB-SubCell"/>
</dbReference>
<dbReference type="GO" id="GO:0000502">
    <property type="term" value="C:proteasome complex"/>
    <property type="evidence" value="ECO:0000250"/>
    <property type="project" value="UniProtKB"/>
</dbReference>
<dbReference type="GO" id="GO:0008541">
    <property type="term" value="C:proteasome regulatory particle, lid subcomplex"/>
    <property type="evidence" value="ECO:0000318"/>
    <property type="project" value="GO_Central"/>
</dbReference>
<dbReference type="GO" id="GO:0061133">
    <property type="term" value="F:endopeptidase activator activity"/>
    <property type="evidence" value="ECO:0000250"/>
    <property type="project" value="UniProtKB"/>
</dbReference>
<dbReference type="GO" id="GO:0070628">
    <property type="term" value="F:proteasome binding"/>
    <property type="evidence" value="ECO:0000318"/>
    <property type="project" value="GO_Central"/>
</dbReference>
<dbReference type="GO" id="GO:1990381">
    <property type="term" value="F:ubiquitin-specific protease binding"/>
    <property type="evidence" value="ECO:0000353"/>
    <property type="project" value="UniProtKB"/>
</dbReference>
<dbReference type="GO" id="GO:0043248">
    <property type="term" value="P:proteasome assembly"/>
    <property type="evidence" value="ECO:0000250"/>
    <property type="project" value="UniProtKB"/>
</dbReference>
<dbReference type="CDD" id="cd13314">
    <property type="entry name" value="PH_Rpn13"/>
    <property type="match status" value="1"/>
</dbReference>
<dbReference type="FunFam" id="2.30.29.70:FF:000001">
    <property type="entry name" value="Proteasomal ubiquitin receptor ADRM1"/>
    <property type="match status" value="1"/>
</dbReference>
<dbReference type="Gene3D" id="1.10.2020.20">
    <property type="match status" value="1"/>
</dbReference>
<dbReference type="Gene3D" id="2.30.29.70">
    <property type="entry name" value="Proteasomal ubiquitin receptor Rpn13/ADRM1"/>
    <property type="match status" value="1"/>
</dbReference>
<dbReference type="InterPro" id="IPR044867">
    <property type="entry name" value="DEUBAD_dom"/>
</dbReference>
<dbReference type="InterPro" id="IPR006773">
    <property type="entry name" value="Rpn13/ADRM1"/>
</dbReference>
<dbReference type="InterPro" id="IPR044868">
    <property type="entry name" value="Rpn13/ADRM1_Pru"/>
</dbReference>
<dbReference type="InterPro" id="IPR038633">
    <property type="entry name" value="Rpn13/ADRM1_Pru_sf"/>
</dbReference>
<dbReference type="InterPro" id="IPR032368">
    <property type="entry name" value="RPN13_DEUBAD"/>
</dbReference>
<dbReference type="InterPro" id="IPR038108">
    <property type="entry name" value="RPN13_DEUBAD_sf"/>
</dbReference>
<dbReference type="PANTHER" id="PTHR12225">
    <property type="entry name" value="ADHESION REGULATING MOLECULE 1 110 KDA CELL MEMBRANE GLYCOPROTEIN"/>
    <property type="match status" value="1"/>
</dbReference>
<dbReference type="PANTHER" id="PTHR12225:SF0">
    <property type="entry name" value="PROTEASOMAL UBIQUITIN RECEPTOR ADRM1"/>
    <property type="match status" value="1"/>
</dbReference>
<dbReference type="Pfam" id="PF04683">
    <property type="entry name" value="Rpn13_ADRM1_Pru"/>
    <property type="match status" value="1"/>
</dbReference>
<dbReference type="Pfam" id="PF16550">
    <property type="entry name" value="RPN13_C"/>
    <property type="match status" value="1"/>
</dbReference>
<dbReference type="PROSITE" id="PS51916">
    <property type="entry name" value="DEUBAD"/>
    <property type="match status" value="1"/>
</dbReference>
<dbReference type="PROSITE" id="PS51917">
    <property type="entry name" value="PRU"/>
    <property type="match status" value="1"/>
</dbReference>
<name>ADRM1_CAEEL</name>
<keyword id="KW-0963">Cytoplasm</keyword>
<keyword id="KW-0539">Nucleus</keyword>
<keyword id="KW-0647">Proteasome</keyword>
<keyword id="KW-1185">Reference proteome</keyword>
<comment type="function">
    <text evidence="1">May function as a proteasomal ubiquitin receptor. May promote the deubiquitinating activity associated with the 26S proteasome.</text>
</comment>
<comment type="subunit">
    <text evidence="1 5">Component of the 19S proteasome regulatory particle complex (By similarity). The 26S proteasome consists of a 20S core particle (CP) and two 19S regulatory subunits (RP) (By similarity). Interacts with deubiquitinase ubh-4 (PubMed:23770237).</text>
</comment>
<comment type="subcellular location">
    <subcellularLocation>
        <location evidence="1">Cytoplasm</location>
    </subcellularLocation>
    <subcellularLocation>
        <location evidence="1">Nucleus</location>
    </subcellularLocation>
</comment>
<comment type="domain">
    <text evidence="1">The Pru (pleckstrin-like receptor for ubiquitin) domain mediates interactions with rpn-2 and ubiquitin. Preferential binding to the proximal subunit of K48-linked diubiquitin allows ubh-4 access to the distal subunit.</text>
</comment>
<comment type="similarity">
    <text evidence="6">Belongs to the ADRM1 family.</text>
</comment>
<reference key="1">
    <citation type="journal article" date="1998" name="Science">
        <title>Genome sequence of the nematode C. elegans: a platform for investigating biology.</title>
        <authorList>
            <consortium name="The C. elegans sequencing consortium"/>
        </authorList>
    </citation>
    <scope>NUCLEOTIDE SEQUENCE [LARGE SCALE GENOMIC DNA]</scope>
    <source>
        <strain>Bristol N2</strain>
    </source>
</reference>
<reference key="2">
    <citation type="journal article" date="2013" name="Cell Rep.">
        <title>Insulin/IGF-1 signaling regulates proteasome activity through the deubiquitinating enzyme UBH-4.</title>
        <authorList>
            <person name="Matilainen O."/>
            <person name="Arpalahti L."/>
            <person name="Rantanen V."/>
            <person name="Hautaniemi S."/>
            <person name="Holmberg C.I."/>
        </authorList>
    </citation>
    <scope>INTERACTION WITH UBH-4</scope>
</reference>
<organism>
    <name type="scientific">Caenorhabditis elegans</name>
    <dbReference type="NCBI Taxonomy" id="6239"/>
    <lineage>
        <taxon>Eukaryota</taxon>
        <taxon>Metazoa</taxon>
        <taxon>Ecdysozoa</taxon>
        <taxon>Nematoda</taxon>
        <taxon>Chromadorea</taxon>
        <taxon>Rhabditida</taxon>
        <taxon>Rhabditina</taxon>
        <taxon>Rhabditomorpha</taxon>
        <taxon>Rhabditoidea</taxon>
        <taxon>Rhabditidae</taxon>
        <taxon>Peloderinae</taxon>
        <taxon>Caenorhabditis</taxon>
    </lineage>
</organism>
<gene>
    <name evidence="7" type="primary">rpn-13</name>
    <name evidence="7" type="ORF">C56G2.7</name>
</gene>
<proteinExistence type="evidence at protein level"/>
<accession>Q09289</accession>
<protein>
    <recommendedName>
        <fullName evidence="6">Proteasomal ubiquitin receptor ADRM1 homolog</fullName>
    </recommendedName>
    <alternativeName>
        <fullName evidence="7">Proteasome non-ATPase regulatory particle-like protein 13</fullName>
    </alternativeName>
</protein>